<evidence type="ECO:0000250" key="1">
    <source>
        <dbReference type="UniProtKB" id="Q8WNV7"/>
    </source>
</evidence>
<evidence type="ECO:0000250" key="2">
    <source>
        <dbReference type="UniProtKB" id="Q99714"/>
    </source>
</evidence>
<evidence type="ECO:0000255" key="3"/>
<evidence type="ECO:0000269" key="4">
    <source>
    </source>
</evidence>
<evidence type="ECO:0000269" key="5">
    <source>
    </source>
</evidence>
<evidence type="ECO:0000269" key="6">
    <source>
    </source>
</evidence>
<evidence type="ECO:0000303" key="7">
    <source>
    </source>
</evidence>
<evidence type="ECO:0000303" key="8">
    <source>
    </source>
</evidence>
<evidence type="ECO:0000303" key="9">
    <source>
    </source>
</evidence>
<evidence type="ECO:0000303" key="10">
    <source ref="2"/>
</evidence>
<evidence type="ECO:0000305" key="11"/>
<evidence type="ECO:0000312" key="12">
    <source>
        <dbReference type="HGNC" id="HGNC:30311"/>
    </source>
</evidence>
<protein>
    <recommendedName>
        <fullName evidence="9">Epidermal retinol dehydrogenase 2</fullName>
        <shortName>EPHD-2</shortName>
        <shortName evidence="7">RDH-E2</shortName>
        <ecNumber evidence="6">1.1.1.105</ecNumber>
    </recommendedName>
    <alternativeName>
        <fullName>Retinal short-chain dehydrogenase reductase 2</fullName>
        <shortName>retSDR2</shortName>
    </alternativeName>
    <alternativeName>
        <fullName>Short-chain dehydrogenase/reductase family 16C member 5</fullName>
    </alternativeName>
</protein>
<comment type="function">
    <text evidence="6">Oxidoreductase with strong preference for NAD (PubMed:18926804). Active in both the oxidative and reductive directions (PubMed:18926804). Oxidizes all-trans-retinol in all-trans-retinaldehyde (PubMed:18926804). No activity was detected with 11-cis-retinol or 11-cis-retinaldehyde as substrates with either NAD(+)/NADH or NADP(+)/NADPH (PubMed:18926804).</text>
</comment>
<comment type="catalytic activity">
    <reaction evidence="6">
        <text>all-trans-retinol--[retinol-binding protein] + NAD(+) = all-trans-retinal--[retinol-binding protein] + NADH + H(+)</text>
        <dbReference type="Rhea" id="RHEA:48488"/>
        <dbReference type="Rhea" id="RHEA-COMP:14428"/>
        <dbReference type="Rhea" id="RHEA-COMP:14430"/>
        <dbReference type="ChEBI" id="CHEBI:15378"/>
        <dbReference type="ChEBI" id="CHEBI:17336"/>
        <dbReference type="ChEBI" id="CHEBI:17898"/>
        <dbReference type="ChEBI" id="CHEBI:57540"/>
        <dbReference type="ChEBI" id="CHEBI:57945"/>
        <dbReference type="ChEBI" id="CHEBI:83228"/>
        <dbReference type="EC" id="1.1.1.105"/>
    </reaction>
</comment>
<comment type="pathway">
    <text evidence="6">Cofactor metabolism; retinol metabolism.</text>
</comment>
<comment type="interaction">
    <interactant intactId="EBI-3923480">
        <id>Q8N3Y7</id>
    </interactant>
    <interactant intactId="EBI-2339219">
        <id>Q08426</id>
        <label>EHHADH</label>
    </interactant>
    <organismsDiffer>false</organismsDiffer>
    <experiments>3</experiments>
</comment>
<comment type="interaction">
    <interactant intactId="EBI-3923480">
        <id>Q8N3Y7</id>
    </interactant>
    <interactant intactId="EBI-714482">
        <id>Q9BWH2</id>
        <label>FUNDC2</label>
    </interactant>
    <organismsDiffer>false</organismsDiffer>
    <experiments>3</experiments>
</comment>
<comment type="interaction">
    <interactant intactId="EBI-3923480">
        <id>Q8N3Y7</id>
    </interactant>
    <interactant intactId="EBI-9304251">
        <id>Q05329</id>
        <label>GAD2</label>
    </interactant>
    <organismsDiffer>false</organismsDiffer>
    <experiments>3</experiments>
</comment>
<comment type="interaction">
    <interactant intactId="EBI-3923480">
        <id>Q8N3Y7</id>
    </interactant>
    <interactant intactId="EBI-947253">
        <id>Q9UBD0</id>
        <label>HSFX2</label>
    </interactant>
    <organismsDiffer>false</organismsDiffer>
    <experiments>3</experiments>
</comment>
<comment type="interaction">
    <interactant intactId="EBI-3923480">
        <id>Q8N3Y7</id>
    </interactant>
    <interactant intactId="EBI-11978907">
        <id>Q9ULP0-2</id>
        <label>NDRG4</label>
    </interactant>
    <organismsDiffer>false</organismsDiffer>
    <experiments>3</experiments>
</comment>
<comment type="interaction">
    <interactant intactId="EBI-3923480">
        <id>Q8N3Y7</id>
    </interactant>
    <interactant intactId="EBI-714881">
        <id>Q9HC62</id>
        <label>SENP2</label>
    </interactant>
    <organismsDiffer>false</organismsDiffer>
    <experiments>3</experiments>
</comment>
<comment type="interaction">
    <interactant intactId="EBI-3923480">
        <id>Q8N3Y7</id>
    </interactant>
    <interactant intactId="EBI-2822329">
        <id>Q13596</id>
        <label>SNX1</label>
    </interactant>
    <organismsDiffer>false</organismsDiffer>
    <experiments>3</experiments>
</comment>
<comment type="interaction">
    <interactant intactId="EBI-3923480">
        <id>Q8N3Y7</id>
    </interactant>
    <interactant intactId="EBI-10238936">
        <id>Q17RD7</id>
        <label>SYT16</label>
    </interactant>
    <organismsDiffer>false</organismsDiffer>
    <experiments>3</experiments>
</comment>
<comment type="interaction">
    <interactant intactId="EBI-3923480">
        <id>Q8N3Y7</id>
    </interactant>
    <interactant intactId="EBI-10210710">
        <id>P49638</id>
        <label>TTPA</label>
    </interactant>
    <organismsDiffer>false</organismsDiffer>
    <experiments>3</experiments>
</comment>
<comment type="subcellular location">
    <subcellularLocation>
        <location evidence="6">Endoplasmic reticulum membrane</location>
        <topology evidence="3">Multi-pass membrane protein</topology>
    </subcellularLocation>
</comment>
<comment type="alternative products">
    <event type="alternative splicing"/>
    <isoform>
        <id>Q8N3Y7-1</id>
        <name>1</name>
        <sequence type="displayed"/>
    </isoform>
    <isoform>
        <id>Q8N3Y7-2</id>
        <name>2</name>
        <sequence type="described" ref="VSP_028389"/>
    </isoform>
</comment>
<comment type="tissue specificity">
    <text evidence="4">Detected in adult lung. Detected at low levels in adult brain, heart, testis, placenta, cervix, pancreas, uterus, stomach, rectum, small intestine, colon, esophagus, thymus, skin, and skin keratinocyte. Expression is higher in psoriasis lesions relative to unaffected skin from psoriasis patients. Detected in fetal kidney, skin and lung.</text>
</comment>
<comment type="similarity">
    <text evidence="11">Belongs to the short-chain dehydrogenases/reductases (SDR) family.</text>
</comment>
<comment type="sequence caution" evidence="11">
    <conflict type="frameshift">
        <sequence resource="EMBL-CDS" id="BAB71545"/>
    </conflict>
</comment>
<sequence>MSFNLQSSKKLFIFLGKSLFSLLEAMIFALLPKPRKNVAGEIVLITGAGSGLGRLLALQFARLGSVLVLWDINKEGNEETCKMAREAGATRVHAYTCDCSQKEGVYRVADQVKKEVGDVSILINNAGIVTGKKFLDCPDELMEKSFDVNFKAHLWTYKAFLPAMIANDHGHLVCISSSAGLSGVNGLADYCASKFAAFGFAESVFVETFVQKQKGIKTTIVCPFFIKTGMFEGCTTGCPSLLPILEPKYAVEKIVEAILQEKMYLYMPKLLYFMMFLKSFLPLKTGLLIADYLGILHAMDGFVDQKKKL</sequence>
<reference key="1">
    <citation type="journal article" date="2002" name="Biochem. Biophys. Res. Commun.">
        <title>Identification of the hRDH-E2 gene, a novel member of the SDR family, and its increased expression in psoriatic lesion.</title>
        <authorList>
            <person name="Matsuzaka Y."/>
            <person name="Okamoto K."/>
            <person name="Tsuji H."/>
            <person name="Mabuchi T."/>
            <person name="Ozawa A."/>
            <person name="Tamiya G."/>
            <person name="Inoko H."/>
        </authorList>
    </citation>
    <scope>NUCLEOTIDE SEQUENCE [MRNA] (ISOFORM 1)</scope>
    <scope>TISSUE SPECIFICITY</scope>
    <source>
        <tissue>Keratinocyte</tissue>
    </source>
</reference>
<reference key="2">
    <citation type="submission" date="2003-10" db="EMBL/GenBank/DDBJ databases">
        <title>Cloning of a novel splice variant of RDH-E2.</title>
        <authorList>
            <person name="Zheng H."/>
            <person name="Xie Y."/>
            <person name="Mao Y."/>
        </authorList>
    </citation>
    <scope>NUCLEOTIDE SEQUENCE [LARGE SCALE MRNA] (ISOFORM 2)</scope>
</reference>
<reference key="3">
    <citation type="journal article" date="2004" name="Nat. Genet.">
        <title>Complete sequencing and characterization of 21,243 full-length human cDNAs.</title>
        <authorList>
            <person name="Ota T."/>
            <person name="Suzuki Y."/>
            <person name="Nishikawa T."/>
            <person name="Otsuki T."/>
            <person name="Sugiyama T."/>
            <person name="Irie R."/>
            <person name="Wakamatsu A."/>
            <person name="Hayashi K."/>
            <person name="Sato H."/>
            <person name="Nagai K."/>
            <person name="Kimura K."/>
            <person name="Makita H."/>
            <person name="Sekine M."/>
            <person name="Obayashi M."/>
            <person name="Nishi T."/>
            <person name="Shibahara T."/>
            <person name="Tanaka T."/>
            <person name="Ishii S."/>
            <person name="Yamamoto J."/>
            <person name="Saito K."/>
            <person name="Kawai Y."/>
            <person name="Isono Y."/>
            <person name="Nakamura Y."/>
            <person name="Nagahari K."/>
            <person name="Murakami K."/>
            <person name="Yasuda T."/>
            <person name="Iwayanagi T."/>
            <person name="Wagatsuma M."/>
            <person name="Shiratori A."/>
            <person name="Sudo H."/>
            <person name="Hosoiri T."/>
            <person name="Kaku Y."/>
            <person name="Kodaira H."/>
            <person name="Kondo H."/>
            <person name="Sugawara M."/>
            <person name="Takahashi M."/>
            <person name="Kanda K."/>
            <person name="Yokoi T."/>
            <person name="Furuya T."/>
            <person name="Kikkawa E."/>
            <person name="Omura Y."/>
            <person name="Abe K."/>
            <person name="Kamihara K."/>
            <person name="Katsuta N."/>
            <person name="Sato K."/>
            <person name="Tanikawa M."/>
            <person name="Yamazaki M."/>
            <person name="Ninomiya K."/>
            <person name="Ishibashi T."/>
            <person name="Yamashita H."/>
            <person name="Murakawa K."/>
            <person name="Fujimori K."/>
            <person name="Tanai H."/>
            <person name="Kimata M."/>
            <person name="Watanabe M."/>
            <person name="Hiraoka S."/>
            <person name="Chiba Y."/>
            <person name="Ishida S."/>
            <person name="Ono Y."/>
            <person name="Takiguchi S."/>
            <person name="Watanabe S."/>
            <person name="Yosida M."/>
            <person name="Hotuta T."/>
            <person name="Kusano J."/>
            <person name="Kanehori K."/>
            <person name="Takahashi-Fujii A."/>
            <person name="Hara H."/>
            <person name="Tanase T.-O."/>
            <person name="Nomura Y."/>
            <person name="Togiya S."/>
            <person name="Komai F."/>
            <person name="Hara R."/>
            <person name="Takeuchi K."/>
            <person name="Arita M."/>
            <person name="Imose N."/>
            <person name="Musashino K."/>
            <person name="Yuuki H."/>
            <person name="Oshima A."/>
            <person name="Sasaki N."/>
            <person name="Aotsuka S."/>
            <person name="Yoshikawa Y."/>
            <person name="Matsunawa H."/>
            <person name="Ichihara T."/>
            <person name="Shiohata N."/>
            <person name="Sano S."/>
            <person name="Moriya S."/>
            <person name="Momiyama H."/>
            <person name="Satoh N."/>
            <person name="Takami S."/>
            <person name="Terashima Y."/>
            <person name="Suzuki O."/>
            <person name="Nakagawa S."/>
            <person name="Senoh A."/>
            <person name="Mizoguchi H."/>
            <person name="Goto Y."/>
            <person name="Shimizu F."/>
            <person name="Wakebe H."/>
            <person name="Hishigaki H."/>
            <person name="Watanabe T."/>
            <person name="Sugiyama A."/>
            <person name="Takemoto M."/>
            <person name="Kawakami B."/>
            <person name="Yamazaki M."/>
            <person name="Watanabe K."/>
            <person name="Kumagai A."/>
            <person name="Itakura S."/>
            <person name="Fukuzumi Y."/>
            <person name="Fujimori Y."/>
            <person name="Komiyama M."/>
            <person name="Tashiro H."/>
            <person name="Tanigami A."/>
            <person name="Fujiwara T."/>
            <person name="Ono T."/>
            <person name="Yamada K."/>
            <person name="Fujii Y."/>
            <person name="Ozaki K."/>
            <person name="Hirao M."/>
            <person name="Ohmori Y."/>
            <person name="Kawabata A."/>
            <person name="Hikiji T."/>
            <person name="Kobatake N."/>
            <person name="Inagaki H."/>
            <person name="Ikema Y."/>
            <person name="Okamoto S."/>
            <person name="Okitani R."/>
            <person name="Kawakami T."/>
            <person name="Noguchi S."/>
            <person name="Itoh T."/>
            <person name="Shigeta K."/>
            <person name="Senba T."/>
            <person name="Matsumura K."/>
            <person name="Nakajima Y."/>
            <person name="Mizuno T."/>
            <person name="Morinaga M."/>
            <person name="Sasaki M."/>
            <person name="Togashi T."/>
            <person name="Oyama M."/>
            <person name="Hata H."/>
            <person name="Watanabe M."/>
            <person name="Komatsu T."/>
            <person name="Mizushima-Sugano J."/>
            <person name="Satoh T."/>
            <person name="Shirai Y."/>
            <person name="Takahashi Y."/>
            <person name="Nakagawa K."/>
            <person name="Okumura K."/>
            <person name="Nagase T."/>
            <person name="Nomura N."/>
            <person name="Kikuchi H."/>
            <person name="Masuho Y."/>
            <person name="Yamashita R."/>
            <person name="Nakai K."/>
            <person name="Yada T."/>
            <person name="Nakamura Y."/>
            <person name="Ohara O."/>
            <person name="Isogai T."/>
            <person name="Sugano S."/>
        </authorList>
    </citation>
    <scope>NUCLEOTIDE SEQUENCE [LARGE SCALE MRNA] (ISOFORMS 1 AND 2)</scope>
    <source>
        <tissue>Brain</tissue>
        <tissue>Trachea</tissue>
    </source>
</reference>
<reference key="4">
    <citation type="submission" date="2005-07" db="EMBL/GenBank/DDBJ databases">
        <authorList>
            <person name="Mural R.J."/>
            <person name="Istrail S."/>
            <person name="Sutton G.G."/>
            <person name="Florea L."/>
            <person name="Halpern A.L."/>
            <person name="Mobarry C.M."/>
            <person name="Lippert R."/>
            <person name="Walenz B."/>
            <person name="Shatkay H."/>
            <person name="Dew I."/>
            <person name="Miller J.R."/>
            <person name="Flanigan M.J."/>
            <person name="Edwards N.J."/>
            <person name="Bolanos R."/>
            <person name="Fasulo D."/>
            <person name="Halldorsson B.V."/>
            <person name="Hannenhalli S."/>
            <person name="Turner R."/>
            <person name="Yooseph S."/>
            <person name="Lu F."/>
            <person name="Nusskern D.R."/>
            <person name="Shue B.C."/>
            <person name="Zheng X.H."/>
            <person name="Zhong F."/>
            <person name="Delcher A.L."/>
            <person name="Huson D.H."/>
            <person name="Kravitz S.A."/>
            <person name="Mouchard L."/>
            <person name="Reinert K."/>
            <person name="Remington K.A."/>
            <person name="Clark A.G."/>
            <person name="Waterman M.S."/>
            <person name="Eichler E.E."/>
            <person name="Adams M.D."/>
            <person name="Hunkapiller M.W."/>
            <person name="Myers E.W."/>
            <person name="Venter J.C."/>
        </authorList>
    </citation>
    <scope>NUCLEOTIDE SEQUENCE [LARGE SCALE GENOMIC DNA]</scope>
</reference>
<reference key="5">
    <citation type="journal article" date="2004" name="Genome Res.">
        <title>The status, quality, and expansion of the NIH full-length cDNA project: the Mammalian Gene Collection (MGC).</title>
        <authorList>
            <consortium name="The MGC Project Team"/>
        </authorList>
    </citation>
    <scope>NUCLEOTIDE SEQUENCE [LARGE SCALE MRNA] (ISOFORM 1)</scope>
    <source>
        <tissue>Brain</tissue>
    </source>
</reference>
<reference key="6">
    <citation type="journal article" date="2009" name="Chem. Biol. Interact.">
        <title>Biochemical characterization of human epidermal retinol dehydrogenase 2.</title>
        <authorList>
            <person name="Lee S.-A."/>
            <person name="Belyaeva O.V."/>
            <person name="Kedishvili N.Y."/>
        </authorList>
    </citation>
    <scope>FUNCTION</scope>
    <scope>CATALYTIC ACTIVITY</scope>
    <scope>PATHWAY</scope>
    <scope>SUBCELLULAR LOCATION</scope>
</reference>
<reference key="7">
    <citation type="journal article" date="2004" name="Mamm. Genome">
        <title>hRDH-E2 gene polymorphisms, variable transcriptional start sites, and psoriasis.</title>
        <authorList>
            <person name="Matsuzaka Y."/>
            <person name="Okamoto K."/>
            <person name="Yoshikawa Y."/>
            <person name="Takaki A."/>
            <person name="Oka A."/>
            <person name="Mabuchi T."/>
            <person name="Iizuka M."/>
            <person name="Ozawa A."/>
            <person name="Tamiya G."/>
            <person name="Kulski J.K."/>
            <person name="Inoko H."/>
        </authorList>
    </citation>
    <scope>VARIANT TRP-62</scope>
</reference>
<dbReference type="EC" id="1.1.1.105" evidence="6"/>
<dbReference type="EMBL" id="AB083038">
    <property type="protein sequence ID" value="BAB91014.1"/>
    <property type="molecule type" value="mRNA"/>
</dbReference>
<dbReference type="EMBL" id="AY444559">
    <property type="protein sequence ID" value="AAS68535.1"/>
    <property type="molecule type" value="mRNA"/>
</dbReference>
<dbReference type="EMBL" id="AK057667">
    <property type="protein sequence ID" value="BAB71545.1"/>
    <property type="status" value="ALT_FRAME"/>
    <property type="molecule type" value="mRNA"/>
</dbReference>
<dbReference type="EMBL" id="AK294634">
    <property type="protein sequence ID" value="BAG57813.1"/>
    <property type="molecule type" value="mRNA"/>
</dbReference>
<dbReference type="EMBL" id="CH471068">
    <property type="protein sequence ID" value="EAW86780.1"/>
    <property type="molecule type" value="Genomic_DNA"/>
</dbReference>
<dbReference type="EMBL" id="BC037219">
    <property type="protein sequence ID" value="AAH37219.2"/>
    <property type="molecule type" value="mRNA"/>
</dbReference>
<dbReference type="EMBL" id="BC064525">
    <property type="protein sequence ID" value="AAH64525.1"/>
    <property type="molecule type" value="mRNA"/>
</dbReference>
<dbReference type="CCDS" id="CCDS6167.1">
    <molecule id="Q8N3Y7-1"/>
</dbReference>
<dbReference type="CCDS" id="CCDS83295.1">
    <molecule id="Q8N3Y7-2"/>
</dbReference>
<dbReference type="PIR" id="JC7895">
    <property type="entry name" value="JC7895"/>
</dbReference>
<dbReference type="RefSeq" id="NP_001304978.1">
    <property type="nucleotide sequence ID" value="NM_001318049.1"/>
</dbReference>
<dbReference type="RefSeq" id="NP_001304979.1">
    <molecule id="Q8N3Y7-2"/>
    <property type="nucleotide sequence ID" value="NM_001318050.2"/>
</dbReference>
<dbReference type="RefSeq" id="NP_620419.2">
    <molecule id="Q8N3Y7-1"/>
    <property type="nucleotide sequence ID" value="NM_138969.3"/>
</dbReference>
<dbReference type="SMR" id="Q8N3Y7"/>
<dbReference type="BioGRID" id="128184">
    <property type="interactions" value="53"/>
</dbReference>
<dbReference type="FunCoup" id="Q8N3Y7">
    <property type="interactions" value="499"/>
</dbReference>
<dbReference type="IntAct" id="Q8N3Y7">
    <property type="interactions" value="35"/>
</dbReference>
<dbReference type="STRING" id="9606.ENSP00000431010"/>
<dbReference type="MoonProt" id="Q8N3Y7"/>
<dbReference type="CarbonylDB" id="Q8N3Y7"/>
<dbReference type="GlyGen" id="Q8N3Y7">
    <property type="glycosylation" value="3 sites, 1 O-linked glycan (3 sites)"/>
</dbReference>
<dbReference type="iPTMnet" id="Q8N3Y7"/>
<dbReference type="PhosphoSitePlus" id="Q8N3Y7"/>
<dbReference type="BioMuta" id="SDR16C5"/>
<dbReference type="DMDM" id="74750974"/>
<dbReference type="jPOST" id="Q8N3Y7"/>
<dbReference type="MassIVE" id="Q8N3Y7"/>
<dbReference type="PaxDb" id="9606-ENSP00000307607"/>
<dbReference type="PeptideAtlas" id="Q8N3Y7"/>
<dbReference type="PRIDE" id="Q8N3Y7"/>
<dbReference type="ProteomicsDB" id="71850">
    <molecule id="Q8N3Y7-1"/>
</dbReference>
<dbReference type="ProteomicsDB" id="71851">
    <molecule id="Q8N3Y7-2"/>
</dbReference>
<dbReference type="Antibodypedia" id="11761">
    <property type="antibodies" value="118 antibodies from 21 providers"/>
</dbReference>
<dbReference type="DNASU" id="195814"/>
<dbReference type="Ensembl" id="ENST00000303749.8">
    <molecule id="Q8N3Y7-1"/>
    <property type="protein sequence ID" value="ENSP00000307607.3"/>
    <property type="gene ID" value="ENSG00000170786.13"/>
</dbReference>
<dbReference type="Ensembl" id="ENST00000396721.6">
    <molecule id="Q8N3Y7-2"/>
    <property type="protein sequence ID" value="ENSP00000379947.2"/>
    <property type="gene ID" value="ENSG00000170786.13"/>
</dbReference>
<dbReference type="GeneID" id="195814"/>
<dbReference type="KEGG" id="hsa:195814"/>
<dbReference type="MANE-Select" id="ENST00000303749.8">
    <property type="protein sequence ID" value="ENSP00000307607.3"/>
    <property type="RefSeq nucleotide sequence ID" value="NM_138969.4"/>
    <property type="RefSeq protein sequence ID" value="NP_620419.2"/>
</dbReference>
<dbReference type="UCSC" id="uc003xsy.2">
    <molecule id="Q8N3Y7-1"/>
    <property type="organism name" value="human"/>
</dbReference>
<dbReference type="AGR" id="HGNC:30311"/>
<dbReference type="CTD" id="195814"/>
<dbReference type="DisGeNET" id="195814"/>
<dbReference type="GeneCards" id="SDR16C5"/>
<dbReference type="HGNC" id="HGNC:30311">
    <property type="gene designation" value="SDR16C5"/>
</dbReference>
<dbReference type="HPA" id="ENSG00000170786">
    <property type="expression patterns" value="Tissue enhanced (esophagus, lung, skin)"/>
</dbReference>
<dbReference type="MIM" id="608989">
    <property type="type" value="gene"/>
</dbReference>
<dbReference type="neXtProt" id="NX_Q8N3Y7"/>
<dbReference type="OpenTargets" id="ENSG00000170786"/>
<dbReference type="PharmGKB" id="PA164725585"/>
<dbReference type="VEuPathDB" id="HostDB:ENSG00000170786"/>
<dbReference type="eggNOG" id="KOG1201">
    <property type="taxonomic scope" value="Eukaryota"/>
</dbReference>
<dbReference type="GeneTree" id="ENSGT00940000156731"/>
<dbReference type="HOGENOM" id="CLU_010194_2_5_1"/>
<dbReference type="InParanoid" id="Q8N3Y7"/>
<dbReference type="OMA" id="RTPMIKM"/>
<dbReference type="OrthoDB" id="10253736at2759"/>
<dbReference type="PAN-GO" id="Q8N3Y7">
    <property type="GO annotations" value="4 GO annotations based on evolutionary models"/>
</dbReference>
<dbReference type="PhylomeDB" id="Q8N3Y7"/>
<dbReference type="TreeFam" id="TF312837"/>
<dbReference type="BioCyc" id="MetaCyc:ENSG00000170786-MONOMER"/>
<dbReference type="BRENDA" id="1.1.1.105">
    <property type="organism ID" value="2681"/>
</dbReference>
<dbReference type="PathwayCommons" id="Q8N3Y7"/>
<dbReference type="Reactome" id="R-HSA-5365859">
    <property type="pathway name" value="RA biosynthesis pathway"/>
</dbReference>
<dbReference type="SignaLink" id="Q8N3Y7"/>
<dbReference type="UniPathway" id="UPA00912"/>
<dbReference type="BioGRID-ORCS" id="195814">
    <property type="hits" value="6 hits in 1147 CRISPR screens"/>
</dbReference>
<dbReference type="ChiTaRS" id="SDR16C5">
    <property type="organism name" value="human"/>
</dbReference>
<dbReference type="GenomeRNAi" id="195814"/>
<dbReference type="Pharos" id="Q8N3Y7">
    <property type="development level" value="Tbio"/>
</dbReference>
<dbReference type="PRO" id="PR:Q8N3Y7"/>
<dbReference type="Proteomes" id="UP000005640">
    <property type="component" value="Chromosome 8"/>
</dbReference>
<dbReference type="RNAct" id="Q8N3Y7">
    <property type="molecule type" value="protein"/>
</dbReference>
<dbReference type="Bgee" id="ENSG00000170786">
    <property type="expression patterns" value="Expressed in upper arm skin and 129 other cell types or tissues"/>
</dbReference>
<dbReference type="ExpressionAtlas" id="Q8N3Y7">
    <property type="expression patterns" value="baseline and differential"/>
</dbReference>
<dbReference type="GO" id="GO:0000785">
    <property type="term" value="C:chromatin"/>
    <property type="evidence" value="ECO:0000314"/>
    <property type="project" value="CAFA"/>
</dbReference>
<dbReference type="GO" id="GO:0005789">
    <property type="term" value="C:endoplasmic reticulum membrane"/>
    <property type="evidence" value="ECO:0000314"/>
    <property type="project" value="UniProtKB"/>
</dbReference>
<dbReference type="GO" id="GO:0005811">
    <property type="term" value="C:lipid droplet"/>
    <property type="evidence" value="ECO:0000318"/>
    <property type="project" value="GO_Central"/>
</dbReference>
<dbReference type="GO" id="GO:0005634">
    <property type="term" value="C:nucleus"/>
    <property type="evidence" value="ECO:0000314"/>
    <property type="project" value="CAFA"/>
</dbReference>
<dbReference type="GO" id="GO:0017053">
    <property type="term" value="C:transcription repressor complex"/>
    <property type="evidence" value="ECO:0000314"/>
    <property type="project" value="CAFA"/>
</dbReference>
<dbReference type="GO" id="GO:0004745">
    <property type="term" value="F:all-trans-retinol dehydrogenase (NAD+) activity"/>
    <property type="evidence" value="ECO:0000314"/>
    <property type="project" value="UniProtKB"/>
</dbReference>
<dbReference type="GO" id="GO:0140297">
    <property type="term" value="F:DNA-binding transcription factor binding"/>
    <property type="evidence" value="ECO:0000353"/>
    <property type="project" value="CAFA"/>
</dbReference>
<dbReference type="GO" id="GO:0061629">
    <property type="term" value="F:RNA polymerase II-specific DNA-binding transcription factor binding"/>
    <property type="evidence" value="ECO:0000353"/>
    <property type="project" value="CAFA"/>
</dbReference>
<dbReference type="GO" id="GO:0003714">
    <property type="term" value="F:transcription corepressor activity"/>
    <property type="evidence" value="ECO:0000314"/>
    <property type="project" value="CAFA"/>
</dbReference>
<dbReference type="GO" id="GO:0043616">
    <property type="term" value="P:keratinocyte proliferation"/>
    <property type="evidence" value="ECO:0000315"/>
    <property type="project" value="UniProtKB"/>
</dbReference>
<dbReference type="GO" id="GO:0045814">
    <property type="term" value="P:negative regulation of gene expression, epigenetic"/>
    <property type="evidence" value="ECO:0000314"/>
    <property type="project" value="CAFA"/>
</dbReference>
<dbReference type="GO" id="GO:0000122">
    <property type="term" value="P:negative regulation of transcription by RNA polymerase II"/>
    <property type="evidence" value="ECO:0000315"/>
    <property type="project" value="CAFA"/>
</dbReference>
<dbReference type="GO" id="GO:0042574">
    <property type="term" value="P:retinal metabolic process"/>
    <property type="evidence" value="ECO:0000314"/>
    <property type="project" value="UniProtKB"/>
</dbReference>
<dbReference type="GO" id="GO:0042572">
    <property type="term" value="P:retinol metabolic process"/>
    <property type="evidence" value="ECO:0000314"/>
    <property type="project" value="UniProtKB"/>
</dbReference>
<dbReference type="CDD" id="cd05339">
    <property type="entry name" value="17beta-HSDXI-like_SDR_c"/>
    <property type="match status" value="1"/>
</dbReference>
<dbReference type="FunFam" id="3.40.50.720:FF:000202">
    <property type="entry name" value="Short-chain dehydrogenase/reductase family 16C member 6"/>
    <property type="match status" value="1"/>
</dbReference>
<dbReference type="Gene3D" id="3.40.50.720">
    <property type="entry name" value="NAD(P)-binding Rossmann-like Domain"/>
    <property type="match status" value="1"/>
</dbReference>
<dbReference type="InterPro" id="IPR036291">
    <property type="entry name" value="NAD(P)-bd_dom_sf"/>
</dbReference>
<dbReference type="InterPro" id="IPR002347">
    <property type="entry name" value="SDR_fam"/>
</dbReference>
<dbReference type="PANTHER" id="PTHR24322:SF728">
    <property type="entry name" value="EPIDERMAL RETINOL DEHYDROGENASE 2"/>
    <property type="match status" value="1"/>
</dbReference>
<dbReference type="PANTHER" id="PTHR24322">
    <property type="entry name" value="PKSB"/>
    <property type="match status" value="1"/>
</dbReference>
<dbReference type="Pfam" id="PF00106">
    <property type="entry name" value="adh_short"/>
    <property type="match status" value="1"/>
</dbReference>
<dbReference type="PRINTS" id="PR00081">
    <property type="entry name" value="GDHRDH"/>
</dbReference>
<dbReference type="PRINTS" id="PR00080">
    <property type="entry name" value="SDRFAMILY"/>
</dbReference>
<dbReference type="SUPFAM" id="SSF51735">
    <property type="entry name" value="NAD(P)-binding Rossmann-fold domains"/>
    <property type="match status" value="1"/>
</dbReference>
<keyword id="KW-0025">Alternative splicing</keyword>
<keyword id="KW-0256">Endoplasmic reticulum</keyword>
<keyword id="KW-0472">Membrane</keyword>
<keyword id="KW-0520">NAD</keyword>
<keyword id="KW-0521">NADP</keyword>
<keyword id="KW-0560">Oxidoreductase</keyword>
<keyword id="KW-1267">Proteomics identification</keyword>
<keyword id="KW-1185">Reference proteome</keyword>
<keyword id="KW-0812">Transmembrane</keyword>
<keyword id="KW-1133">Transmembrane helix</keyword>
<proteinExistence type="evidence at protein level"/>
<accession>Q8N3Y7</accession>
<accession>B4DGK2</accession>
<accession>Q330K3</accession>
<accession>Q8TDV9</accession>
<accession>Q96LX1</accession>
<gene>
    <name evidence="12" type="primary">SDR16C5</name>
    <name evidence="7" type="synonym">RDHE2</name>
</gene>
<organism>
    <name type="scientific">Homo sapiens</name>
    <name type="common">Human</name>
    <dbReference type="NCBI Taxonomy" id="9606"/>
    <lineage>
        <taxon>Eukaryota</taxon>
        <taxon>Metazoa</taxon>
        <taxon>Chordata</taxon>
        <taxon>Craniata</taxon>
        <taxon>Vertebrata</taxon>
        <taxon>Euteleostomi</taxon>
        <taxon>Mammalia</taxon>
        <taxon>Eutheria</taxon>
        <taxon>Euarchontoglires</taxon>
        <taxon>Primates</taxon>
        <taxon>Haplorrhini</taxon>
        <taxon>Catarrhini</taxon>
        <taxon>Hominidae</taxon>
        <taxon>Homo</taxon>
    </lineage>
</organism>
<feature type="chain" id="PRO_0000305973" description="Epidermal retinol dehydrogenase 2">
    <location>
        <begin position="1"/>
        <end position="309"/>
    </location>
</feature>
<feature type="transmembrane region" description="Helical" evidence="3">
    <location>
        <begin position="11"/>
        <end position="31"/>
    </location>
</feature>
<feature type="transmembrane region" description="Helical" evidence="3">
    <location>
        <begin position="270"/>
        <end position="290"/>
    </location>
</feature>
<feature type="active site" description="Proton acceptor" evidence="2">
    <location>
        <position position="190"/>
    </location>
</feature>
<feature type="binding site" evidence="1">
    <location>
        <begin position="44"/>
        <end position="68"/>
    </location>
    <ligand>
        <name>NADP(+)</name>
        <dbReference type="ChEBI" id="CHEBI:58349"/>
    </ligand>
</feature>
<feature type="binding site" evidence="2">
    <location>
        <position position="177"/>
    </location>
    <ligand>
        <name>substrate</name>
    </ligand>
</feature>
<feature type="splice variant" id="VSP_028389" description="In isoform 2." evidence="8 10">
    <location>
        <begin position="112"/>
        <end position="155"/>
    </location>
</feature>
<feature type="sequence variant" id="VAR_035234" description="In dbSNP:rs4151643." evidence="5">
    <original>R</original>
    <variation>W</variation>
    <location>
        <position position="62"/>
    </location>
</feature>
<feature type="sequence conflict" description="In Ref. 1; BAB91014." evidence="11" ref="1">
    <original>H</original>
    <variation>R</variation>
    <location>
        <position position="93"/>
    </location>
</feature>
<feature type="sequence conflict" description="In Ref. 1; BAB91014." evidence="11" ref="1">
    <original>V</original>
    <variation>I</variation>
    <location>
        <position position="116"/>
    </location>
</feature>
<name>RDHE2_HUMAN</name>